<gene>
    <name evidence="1" type="primary">psbC</name>
</gene>
<accession>Q06FW0</accession>
<organism>
    <name type="scientific">Pelargonium hortorum</name>
    <name type="common">Common geranium</name>
    <name type="synonym">Pelargonium inquinans x Pelargonium zonale</name>
    <dbReference type="NCBI Taxonomy" id="4031"/>
    <lineage>
        <taxon>Eukaryota</taxon>
        <taxon>Viridiplantae</taxon>
        <taxon>Streptophyta</taxon>
        <taxon>Embryophyta</taxon>
        <taxon>Tracheophyta</taxon>
        <taxon>Spermatophyta</taxon>
        <taxon>Magnoliopsida</taxon>
        <taxon>eudicotyledons</taxon>
        <taxon>Gunneridae</taxon>
        <taxon>Pentapetalae</taxon>
        <taxon>rosids</taxon>
        <taxon>malvids</taxon>
        <taxon>Geraniales</taxon>
        <taxon>Geraniaceae</taxon>
        <taxon>Pelargonium</taxon>
    </lineage>
</organism>
<name>PSBC_PELHO</name>
<sequence>MKTLYSLRRFYPVETLFNGTLALAGRDQETTGFAWWAGNARLINLSGKLLGAHVAHAGLIVFWAGAMNLFEVAHFVPEKPMYEQGFILLPHLATLGWGVGPGGEVIDTFPYFVSGVLHLISSAVLGFGGIYHALLGPETLEESFPFFGYVWKDRNKMTTILGIHLILLGIGAFLLVFKALSFGGVYDTWAPGGGDVRKITNLTLSPSVLFGYLLKSPFGGEGWIVSVDDLEDIIGGHVWLGSICILGGIWHILTKPFAWARRALVWSGEAYLSYSLGALSVFGFIACCFVWFNNTAYPSEFYGPTGPEASQAQAFTFLVRDQRLGANVGSAQGPTGLGKYLMRSPTGEVIFGGETMRFWDLRAPWLEPLRGPNGLDLSRLKKDIQPWQERRSAEYMTHAPLGSLNSVGGVATEINAVNYVSPRSWLATSHFVLGFFLFVGHLWHAGRARAAAAGFEKGIDRDFEPVLSMTPLN</sequence>
<evidence type="ECO:0000255" key="1">
    <source>
        <dbReference type="HAMAP-Rule" id="MF_01496"/>
    </source>
</evidence>
<proteinExistence type="inferred from homology"/>
<comment type="function">
    <text evidence="1">One of the components of the core complex of photosystem II (PSII). It binds chlorophyll and helps catalyze the primary light-induced photochemical processes of PSII. PSII is a light-driven water:plastoquinone oxidoreductase, using light energy to abstract electrons from H(2)O, generating O(2) and a proton gradient subsequently used for ATP formation.</text>
</comment>
<comment type="cofactor">
    <text evidence="1">Binds multiple chlorophylls and provides some of the ligands for the Ca-4Mn-5O cluster of the oxygen-evolving complex. It may also provide a ligand for a Cl- that is required for oxygen evolution. PSII binds additional chlorophylls, carotenoids and specific lipids.</text>
</comment>
<comment type="subunit">
    <text evidence="1">PSII is composed of 1 copy each of membrane proteins PsbA, PsbB, PsbC, PsbD, PsbE, PsbF, PsbH, PsbI, PsbJ, PsbK, PsbL, PsbM, PsbT, PsbX, PsbY, PsbZ, Psb30/Ycf12, at least 3 peripheral proteins of the oxygen-evolving complex and a large number of cofactors. It forms dimeric complexes.</text>
</comment>
<comment type="subcellular location">
    <subcellularLocation>
        <location evidence="1">Plastid</location>
        <location evidence="1">Chloroplast thylakoid membrane</location>
        <topology evidence="1">Multi-pass membrane protein</topology>
    </subcellularLocation>
</comment>
<comment type="similarity">
    <text evidence="1">Belongs to the PsbB/PsbC family. PsbC subfamily.</text>
</comment>
<dbReference type="EMBL" id="DQ897681">
    <property type="protein sequence ID" value="ABI17262.1"/>
    <property type="molecule type" value="Genomic_DNA"/>
</dbReference>
<dbReference type="RefSeq" id="YP_784071.1">
    <property type="nucleotide sequence ID" value="NC_008454.1"/>
</dbReference>
<dbReference type="SMR" id="Q06FW0"/>
<dbReference type="GeneID" id="4362907"/>
<dbReference type="GO" id="GO:0009535">
    <property type="term" value="C:chloroplast thylakoid membrane"/>
    <property type="evidence" value="ECO:0007669"/>
    <property type="project" value="UniProtKB-SubCell"/>
</dbReference>
<dbReference type="GO" id="GO:0009523">
    <property type="term" value="C:photosystem II"/>
    <property type="evidence" value="ECO:0007669"/>
    <property type="project" value="UniProtKB-KW"/>
</dbReference>
<dbReference type="GO" id="GO:0016168">
    <property type="term" value="F:chlorophyll binding"/>
    <property type="evidence" value="ECO:0007669"/>
    <property type="project" value="UniProtKB-UniRule"/>
</dbReference>
<dbReference type="GO" id="GO:0045156">
    <property type="term" value="F:electron transporter, transferring electrons within the cyclic electron transport pathway of photosynthesis activity"/>
    <property type="evidence" value="ECO:0007669"/>
    <property type="project" value="InterPro"/>
</dbReference>
<dbReference type="GO" id="GO:0046872">
    <property type="term" value="F:metal ion binding"/>
    <property type="evidence" value="ECO:0007669"/>
    <property type="project" value="UniProtKB-KW"/>
</dbReference>
<dbReference type="GO" id="GO:0009772">
    <property type="term" value="P:photosynthetic electron transport in photosystem II"/>
    <property type="evidence" value="ECO:0007669"/>
    <property type="project" value="InterPro"/>
</dbReference>
<dbReference type="FunFam" id="1.10.10.670:FF:000001">
    <property type="entry name" value="Photosystem II CP43 reaction center protein"/>
    <property type="match status" value="1"/>
</dbReference>
<dbReference type="Gene3D" id="1.10.10.670">
    <property type="entry name" value="photosystem ii from thermosynechococcus elongatus"/>
    <property type="match status" value="1"/>
</dbReference>
<dbReference type="HAMAP" id="MF_01496">
    <property type="entry name" value="PSII_PsbC_CP43"/>
    <property type="match status" value="1"/>
</dbReference>
<dbReference type="InterPro" id="IPR000932">
    <property type="entry name" value="PS_antenna-like"/>
</dbReference>
<dbReference type="InterPro" id="IPR036001">
    <property type="entry name" value="PS_II_antenna-like_sf"/>
</dbReference>
<dbReference type="InterPro" id="IPR005869">
    <property type="entry name" value="PSII_PsbC"/>
</dbReference>
<dbReference type="InterPro" id="IPR044900">
    <property type="entry name" value="PSII_PsbC_sf"/>
</dbReference>
<dbReference type="NCBIfam" id="TIGR01153">
    <property type="entry name" value="psbC"/>
    <property type="match status" value="1"/>
</dbReference>
<dbReference type="Pfam" id="PF00421">
    <property type="entry name" value="PSII"/>
    <property type="match status" value="1"/>
</dbReference>
<dbReference type="SUPFAM" id="SSF161077">
    <property type="entry name" value="Photosystem II antenna protein-like"/>
    <property type="match status" value="1"/>
</dbReference>
<keyword id="KW-0007">Acetylation</keyword>
<keyword id="KW-0148">Chlorophyll</keyword>
<keyword id="KW-0150">Chloroplast</keyword>
<keyword id="KW-0157">Chromophore</keyword>
<keyword id="KW-0464">Manganese</keyword>
<keyword id="KW-0472">Membrane</keyword>
<keyword id="KW-0479">Metal-binding</keyword>
<keyword id="KW-0597">Phosphoprotein</keyword>
<keyword id="KW-0602">Photosynthesis</keyword>
<keyword id="KW-0604">Photosystem II</keyword>
<keyword id="KW-0934">Plastid</keyword>
<keyword id="KW-0793">Thylakoid</keyword>
<keyword id="KW-0812">Transmembrane</keyword>
<keyword id="KW-1133">Transmembrane helix</keyword>
<geneLocation type="chloroplast"/>
<protein>
    <recommendedName>
        <fullName evidence="1">Photosystem II CP43 reaction center protein</fullName>
    </recommendedName>
    <alternativeName>
        <fullName evidence="1">PSII 43 kDa protein</fullName>
    </alternativeName>
    <alternativeName>
        <fullName evidence="1">Protein CP-43</fullName>
    </alternativeName>
</protein>
<reference key="1">
    <citation type="journal article" date="2006" name="Mol. Biol. Evol.">
        <title>The complete chloroplast genome sequence of Pelargonium x hortorum: organization and evolution of the largest and most highly rearranged chloroplast genome of land plants.</title>
        <authorList>
            <person name="Chumley T.W."/>
            <person name="Palmer J.D."/>
            <person name="Mower J.P."/>
            <person name="Fourcade H.M."/>
            <person name="Calie P.J."/>
            <person name="Boore J.L."/>
            <person name="Jansen R.K."/>
        </authorList>
    </citation>
    <scope>NUCLEOTIDE SEQUENCE [LARGE SCALE GENOMIC DNA]</scope>
    <source>
        <strain>cv. Ringo White</strain>
    </source>
</reference>
<feature type="propeptide" id="PRO_0000431190" evidence="1">
    <location>
        <begin position="1"/>
        <end position="14"/>
    </location>
</feature>
<feature type="chain" id="PRO_0000361464" description="Photosystem II CP43 reaction center protein" evidence="1">
    <location>
        <begin position="15"/>
        <end position="473"/>
    </location>
</feature>
<feature type="transmembrane region" description="Helical" evidence="1">
    <location>
        <begin position="69"/>
        <end position="93"/>
    </location>
</feature>
<feature type="transmembrane region" description="Helical" evidence="1">
    <location>
        <begin position="134"/>
        <end position="155"/>
    </location>
</feature>
<feature type="transmembrane region" description="Helical" evidence="1">
    <location>
        <begin position="178"/>
        <end position="200"/>
    </location>
</feature>
<feature type="transmembrane region" description="Helical" evidence="1">
    <location>
        <begin position="255"/>
        <end position="275"/>
    </location>
</feature>
<feature type="transmembrane region" description="Helical" evidence="1">
    <location>
        <begin position="291"/>
        <end position="312"/>
    </location>
</feature>
<feature type="transmembrane region" description="Helical" evidence="1">
    <location>
        <begin position="447"/>
        <end position="471"/>
    </location>
</feature>
<feature type="binding site" evidence="1">
    <location>
        <position position="367"/>
    </location>
    <ligand>
        <name>[CaMn4O5] cluster</name>
        <dbReference type="ChEBI" id="CHEBI:189552"/>
    </ligand>
</feature>
<feature type="modified residue" description="N-acetylthreonine" evidence="1">
    <location>
        <position position="15"/>
    </location>
</feature>
<feature type="modified residue" description="Phosphothreonine" evidence="1">
    <location>
        <position position="15"/>
    </location>
</feature>